<dbReference type="EMBL" id="DQ887677">
    <property type="protein sequence ID" value="ABI14461.1"/>
    <property type="molecule type" value="Genomic_DNA"/>
</dbReference>
<dbReference type="RefSeq" id="YP_784462.1">
    <property type="nucleotide sequence ID" value="NC_008457.1"/>
</dbReference>
<dbReference type="SMR" id="Q06GS1"/>
<dbReference type="GeneID" id="4363710"/>
<dbReference type="GO" id="GO:0009507">
    <property type="term" value="C:chloroplast"/>
    <property type="evidence" value="ECO:0007669"/>
    <property type="project" value="UniProtKB-SubCell"/>
</dbReference>
<dbReference type="GO" id="GO:0005763">
    <property type="term" value="C:mitochondrial small ribosomal subunit"/>
    <property type="evidence" value="ECO:0007669"/>
    <property type="project" value="TreeGrafter"/>
</dbReference>
<dbReference type="GO" id="GO:0003735">
    <property type="term" value="F:structural constituent of ribosome"/>
    <property type="evidence" value="ECO:0007669"/>
    <property type="project" value="InterPro"/>
</dbReference>
<dbReference type="GO" id="GO:0006412">
    <property type="term" value="P:translation"/>
    <property type="evidence" value="ECO:0007669"/>
    <property type="project" value="UniProtKB-UniRule"/>
</dbReference>
<dbReference type="CDD" id="cd01425">
    <property type="entry name" value="RPS2"/>
    <property type="match status" value="1"/>
</dbReference>
<dbReference type="FunFam" id="3.40.50.10490:FF:000101">
    <property type="match status" value="1"/>
</dbReference>
<dbReference type="FunFam" id="1.10.287.610:FF:000001">
    <property type="entry name" value="30S ribosomal protein S2"/>
    <property type="match status" value="1"/>
</dbReference>
<dbReference type="Gene3D" id="3.40.50.10490">
    <property type="entry name" value="Glucose-6-phosphate isomerase like protein, domain 1"/>
    <property type="match status" value="1"/>
</dbReference>
<dbReference type="Gene3D" id="1.10.287.610">
    <property type="entry name" value="Helix hairpin bin"/>
    <property type="match status" value="1"/>
</dbReference>
<dbReference type="HAMAP" id="MF_00291_B">
    <property type="entry name" value="Ribosomal_uS2_B"/>
    <property type="match status" value="1"/>
</dbReference>
<dbReference type="InterPro" id="IPR001865">
    <property type="entry name" value="Ribosomal_uS2"/>
</dbReference>
<dbReference type="InterPro" id="IPR005706">
    <property type="entry name" value="Ribosomal_uS2_bac/mit/plastid"/>
</dbReference>
<dbReference type="InterPro" id="IPR018130">
    <property type="entry name" value="Ribosomal_uS2_CS"/>
</dbReference>
<dbReference type="InterPro" id="IPR023591">
    <property type="entry name" value="Ribosomal_uS2_flav_dom_sf"/>
</dbReference>
<dbReference type="NCBIfam" id="TIGR01011">
    <property type="entry name" value="rpsB_bact"/>
    <property type="match status" value="1"/>
</dbReference>
<dbReference type="PANTHER" id="PTHR12534">
    <property type="entry name" value="30S RIBOSOMAL PROTEIN S2 PROKARYOTIC AND ORGANELLAR"/>
    <property type="match status" value="1"/>
</dbReference>
<dbReference type="PANTHER" id="PTHR12534:SF0">
    <property type="entry name" value="SMALL RIBOSOMAL SUBUNIT PROTEIN US2M"/>
    <property type="match status" value="1"/>
</dbReference>
<dbReference type="Pfam" id="PF00318">
    <property type="entry name" value="Ribosomal_S2"/>
    <property type="match status" value="1"/>
</dbReference>
<dbReference type="PRINTS" id="PR00395">
    <property type="entry name" value="RIBOSOMALS2"/>
</dbReference>
<dbReference type="SUPFAM" id="SSF52313">
    <property type="entry name" value="Ribosomal protein S2"/>
    <property type="match status" value="1"/>
</dbReference>
<dbReference type="PROSITE" id="PS00962">
    <property type="entry name" value="RIBOSOMAL_S2_1"/>
    <property type="match status" value="1"/>
</dbReference>
<dbReference type="PROSITE" id="PS00963">
    <property type="entry name" value="RIBOSOMAL_S2_2"/>
    <property type="match status" value="1"/>
</dbReference>
<reference key="1">
    <citation type="journal article" date="2006" name="BMC Evol. Biol.">
        <title>Complete plastid genome sequences of Drimys, Liriodendron, and Piper: implications for the phylogenetic relationships of magnoliids.</title>
        <authorList>
            <person name="Cai Z."/>
            <person name="Penaflor C."/>
            <person name="Kuehl J.V."/>
            <person name="Leebens-Mack J."/>
            <person name="Carlson J.E."/>
            <person name="dePamphilis C.W."/>
            <person name="Boore J.L."/>
            <person name="Jansen R.K."/>
        </authorList>
    </citation>
    <scope>NUCLEOTIDE SEQUENCE [LARGE SCALE GENOMIC DNA]</scope>
</reference>
<protein>
    <recommendedName>
        <fullName evidence="1">Small ribosomal subunit protein uS2c</fullName>
    </recommendedName>
    <alternativeName>
        <fullName>30S ribosomal protein S2, chloroplastic</fullName>
    </alternativeName>
</protein>
<geneLocation type="chloroplast"/>
<gene>
    <name type="primary">rps2</name>
</gene>
<accession>Q06GS1</accession>
<feature type="chain" id="PRO_0000352151" description="Small ribosomal subunit protein uS2c">
    <location>
        <begin position="1"/>
        <end position="236"/>
    </location>
</feature>
<evidence type="ECO:0000305" key="1"/>
<organism>
    <name type="scientific">Piper cenocladum</name>
    <name type="common">Ant piper</name>
    <dbReference type="NCBI Taxonomy" id="398741"/>
    <lineage>
        <taxon>Eukaryota</taxon>
        <taxon>Viridiplantae</taxon>
        <taxon>Streptophyta</taxon>
        <taxon>Embryophyta</taxon>
        <taxon>Tracheophyta</taxon>
        <taxon>Spermatophyta</taxon>
        <taxon>Magnoliopsida</taxon>
        <taxon>Magnoliidae</taxon>
        <taxon>Piperales</taxon>
        <taxon>Piperaceae</taxon>
        <taxon>Piper</taxon>
    </lineage>
</organism>
<comment type="subcellular location">
    <subcellularLocation>
        <location>Plastid</location>
        <location>Chloroplast</location>
    </subcellularLocation>
</comment>
<comment type="similarity">
    <text evidence="1">Belongs to the universal ribosomal protein uS2 family.</text>
</comment>
<name>RR2_PIPCE</name>
<keyword id="KW-0150">Chloroplast</keyword>
<keyword id="KW-0934">Plastid</keyword>
<keyword id="KW-0687">Ribonucleoprotein</keyword>
<keyword id="KW-0689">Ribosomal protein</keyword>
<sequence length="236" mass="26694">MTKRYWNINLEEMMEAGVHFGHGTRKWNPRMAPYISAKRKGIHITNLTRTARFLSETCDLVFDAASRGKHFLIVGTKSKAADLVALAAIRARCHYVNKKWLGGMLTNWSTTETRLHKFRDLRAEQRAGKLNCLPKRDAAMLKRKLSHLQTYLGGIKYMTGLPDIVIIVDQHEEYTALRECITLGIPTICLIDTNCDPDLSDISIPANDDAIASIRLILNKLVSALCEGHSSYIRNR</sequence>
<proteinExistence type="inferred from homology"/>